<name>NDHM_PROM2</name>
<accession>A8G2F0</accession>
<reference key="1">
    <citation type="journal article" date="2007" name="PLoS Genet.">
        <title>Patterns and implications of gene gain and loss in the evolution of Prochlorococcus.</title>
        <authorList>
            <person name="Kettler G.C."/>
            <person name="Martiny A.C."/>
            <person name="Huang K."/>
            <person name="Zucker J."/>
            <person name="Coleman M.L."/>
            <person name="Rodrigue S."/>
            <person name="Chen F."/>
            <person name="Lapidus A."/>
            <person name="Ferriera S."/>
            <person name="Johnson J."/>
            <person name="Steglich C."/>
            <person name="Church G.M."/>
            <person name="Richardson P."/>
            <person name="Chisholm S.W."/>
        </authorList>
    </citation>
    <scope>NUCLEOTIDE SEQUENCE [LARGE SCALE GENOMIC DNA]</scope>
    <source>
        <strain>MIT 9215</strain>
    </source>
</reference>
<evidence type="ECO:0000255" key="1">
    <source>
        <dbReference type="HAMAP-Rule" id="MF_01352"/>
    </source>
</evidence>
<feature type="chain" id="PRO_0000352188" description="NAD(P)H-quinone oxidoreductase subunit M">
    <location>
        <begin position="1"/>
        <end position="115"/>
    </location>
</feature>
<sequence length="115" mass="13531">MEKMLLKSTTRHVRIFTAEVVDKELQFHPNKLTLDLDPDNEFIWNEDSLKKINQKFKELINERAGRDLDDYELRKIGSEVEGLIKFLLQNGELSYNPDCRVMNYSMGLPKTNELL</sequence>
<dbReference type="EC" id="7.1.1.-" evidence="1"/>
<dbReference type="EMBL" id="CP000825">
    <property type="protein sequence ID" value="ABV49781.1"/>
    <property type="molecule type" value="Genomic_DNA"/>
</dbReference>
<dbReference type="RefSeq" id="WP_002807241.1">
    <property type="nucleotide sequence ID" value="NC_009840.1"/>
</dbReference>
<dbReference type="SMR" id="A8G2F0"/>
<dbReference type="STRING" id="93060.P9215_01621"/>
<dbReference type="KEGG" id="pmh:P9215_01621"/>
<dbReference type="eggNOG" id="ENOG5031AQM">
    <property type="taxonomic scope" value="Bacteria"/>
</dbReference>
<dbReference type="HOGENOM" id="CLU_137431_0_0_3"/>
<dbReference type="OrthoDB" id="461686at2"/>
<dbReference type="Proteomes" id="UP000002014">
    <property type="component" value="Chromosome"/>
</dbReference>
<dbReference type="GO" id="GO:0031676">
    <property type="term" value="C:plasma membrane-derived thylakoid membrane"/>
    <property type="evidence" value="ECO:0007669"/>
    <property type="project" value="UniProtKB-SubCell"/>
</dbReference>
<dbReference type="GO" id="GO:0016655">
    <property type="term" value="F:oxidoreductase activity, acting on NAD(P)H, quinone or similar compound as acceptor"/>
    <property type="evidence" value="ECO:0007669"/>
    <property type="project" value="UniProtKB-UniRule"/>
</dbReference>
<dbReference type="GO" id="GO:0048038">
    <property type="term" value="F:quinone binding"/>
    <property type="evidence" value="ECO:0007669"/>
    <property type="project" value="UniProtKB-KW"/>
</dbReference>
<dbReference type="HAMAP" id="MF_01352">
    <property type="entry name" value="NDH1_NDH1M"/>
    <property type="match status" value="1"/>
</dbReference>
<dbReference type="InterPro" id="IPR018922">
    <property type="entry name" value="NdhM"/>
</dbReference>
<dbReference type="PANTHER" id="PTHR36900">
    <property type="entry name" value="NAD(P)H-QUINONE OXIDOREDUCTASE SUBUNIT M, CHLOROPLASTIC"/>
    <property type="match status" value="1"/>
</dbReference>
<dbReference type="PANTHER" id="PTHR36900:SF1">
    <property type="entry name" value="NAD(P)H-QUINONE OXIDOREDUCTASE SUBUNIT M, CHLOROPLASTIC"/>
    <property type="match status" value="1"/>
</dbReference>
<dbReference type="Pfam" id="PF10664">
    <property type="entry name" value="NdhM"/>
    <property type="match status" value="1"/>
</dbReference>
<organism>
    <name type="scientific">Prochlorococcus marinus (strain MIT 9215)</name>
    <dbReference type="NCBI Taxonomy" id="93060"/>
    <lineage>
        <taxon>Bacteria</taxon>
        <taxon>Bacillati</taxon>
        <taxon>Cyanobacteriota</taxon>
        <taxon>Cyanophyceae</taxon>
        <taxon>Synechococcales</taxon>
        <taxon>Prochlorococcaceae</taxon>
        <taxon>Prochlorococcus</taxon>
    </lineage>
</organism>
<protein>
    <recommendedName>
        <fullName evidence="1">NAD(P)H-quinone oxidoreductase subunit M</fullName>
        <ecNumber evidence="1">7.1.1.-</ecNumber>
    </recommendedName>
    <alternativeName>
        <fullName evidence="1">NAD(P)H dehydrogenase I subunit M</fullName>
        <shortName evidence="1">NDH-1 subunit M</shortName>
        <shortName evidence="1">NDH-M</shortName>
    </alternativeName>
</protein>
<gene>
    <name evidence="1" type="primary">ndhM</name>
    <name type="ordered locus">P9215_01621</name>
</gene>
<proteinExistence type="inferred from homology"/>
<keyword id="KW-0472">Membrane</keyword>
<keyword id="KW-0520">NAD</keyword>
<keyword id="KW-0521">NADP</keyword>
<keyword id="KW-0618">Plastoquinone</keyword>
<keyword id="KW-0874">Quinone</keyword>
<keyword id="KW-0793">Thylakoid</keyword>
<keyword id="KW-1278">Translocase</keyword>
<keyword id="KW-0813">Transport</keyword>
<comment type="function">
    <text evidence="1">NDH-1 shuttles electrons from an unknown electron donor, via FMN and iron-sulfur (Fe-S) centers, to quinones in the respiratory and/or the photosynthetic chain. The immediate electron acceptor for the enzyme in this species is believed to be plastoquinone. Couples the redox reaction to proton translocation, and thus conserves the redox energy in a proton gradient. Cyanobacterial NDH-1 also plays a role in inorganic carbon-concentration.</text>
</comment>
<comment type="catalytic activity">
    <reaction evidence="1">
        <text>a plastoquinone + NADH + (n+1) H(+)(in) = a plastoquinol + NAD(+) + n H(+)(out)</text>
        <dbReference type="Rhea" id="RHEA:42608"/>
        <dbReference type="Rhea" id="RHEA-COMP:9561"/>
        <dbReference type="Rhea" id="RHEA-COMP:9562"/>
        <dbReference type="ChEBI" id="CHEBI:15378"/>
        <dbReference type="ChEBI" id="CHEBI:17757"/>
        <dbReference type="ChEBI" id="CHEBI:57540"/>
        <dbReference type="ChEBI" id="CHEBI:57945"/>
        <dbReference type="ChEBI" id="CHEBI:62192"/>
    </reaction>
</comment>
<comment type="catalytic activity">
    <reaction evidence="1">
        <text>a plastoquinone + NADPH + (n+1) H(+)(in) = a plastoquinol + NADP(+) + n H(+)(out)</text>
        <dbReference type="Rhea" id="RHEA:42612"/>
        <dbReference type="Rhea" id="RHEA-COMP:9561"/>
        <dbReference type="Rhea" id="RHEA-COMP:9562"/>
        <dbReference type="ChEBI" id="CHEBI:15378"/>
        <dbReference type="ChEBI" id="CHEBI:17757"/>
        <dbReference type="ChEBI" id="CHEBI:57783"/>
        <dbReference type="ChEBI" id="CHEBI:58349"/>
        <dbReference type="ChEBI" id="CHEBI:62192"/>
    </reaction>
</comment>
<comment type="subunit">
    <text evidence="1">NDH-1 can be composed of about 15 different subunits; different subcomplexes with different compositions have been identified which probably have different functions.</text>
</comment>
<comment type="subcellular location">
    <subcellularLocation>
        <location evidence="1">Cellular thylakoid membrane</location>
        <topology evidence="1">Peripheral membrane protein</topology>
        <orientation evidence="1">Cytoplasmic side</orientation>
    </subcellularLocation>
</comment>
<comment type="similarity">
    <text evidence="1">Belongs to the complex I NdhM subunit family.</text>
</comment>